<proteinExistence type="predicted"/>
<gene>
    <name type="ordered locus">MIMI_L113</name>
</gene>
<name>YL113_MIMIV</name>
<accession>Q5UPI5</accession>
<reference key="1">
    <citation type="journal article" date="2004" name="Science">
        <title>The 1.2-megabase genome sequence of Mimivirus.</title>
        <authorList>
            <person name="Raoult D."/>
            <person name="Audic S."/>
            <person name="Robert C."/>
            <person name="Abergel C."/>
            <person name="Renesto P."/>
            <person name="Ogata H."/>
            <person name="La Scola B."/>
            <person name="Susan M."/>
            <person name="Claverie J.-M."/>
        </authorList>
    </citation>
    <scope>NUCLEOTIDE SEQUENCE [LARGE SCALE GENOMIC DNA]</scope>
    <source>
        <strain>Rowbotham-Bradford</strain>
    </source>
</reference>
<dbReference type="EMBL" id="AY653733">
    <property type="protein sequence ID" value="AAV50388.1"/>
    <property type="molecule type" value="Genomic_DNA"/>
</dbReference>
<dbReference type="SMR" id="Q5UPI5"/>
<dbReference type="KEGG" id="vg:9924711"/>
<dbReference type="Proteomes" id="UP000001134">
    <property type="component" value="Genome"/>
</dbReference>
<protein>
    <recommendedName>
        <fullName>Uncharacterized protein L113</fullName>
    </recommendedName>
</protein>
<feature type="chain" id="PRO_0000071213" description="Uncharacterized protein L113">
    <location>
        <begin position="1"/>
        <end position="183"/>
    </location>
</feature>
<organism>
    <name type="scientific">Acanthamoeba polyphaga mimivirus</name>
    <name type="common">APMV</name>
    <dbReference type="NCBI Taxonomy" id="212035"/>
    <lineage>
        <taxon>Viruses</taxon>
        <taxon>Varidnaviria</taxon>
        <taxon>Bamfordvirae</taxon>
        <taxon>Nucleocytoviricota</taxon>
        <taxon>Megaviricetes</taxon>
        <taxon>Imitervirales</taxon>
        <taxon>Mimiviridae</taxon>
        <taxon>Megamimivirinae</taxon>
        <taxon>Mimivirus</taxon>
        <taxon>Mimivirus bradfordmassiliense</taxon>
    </lineage>
</organism>
<organismHost>
    <name type="scientific">Acanthamoeba polyphaga</name>
    <name type="common">Amoeba</name>
    <dbReference type="NCBI Taxonomy" id="5757"/>
</organismHost>
<sequence>MRNISNRERRNKDCLKLIEKNFSNNVLLSQIEAKNAYQRFIEKQIKGLSIAAFIVQDYDYTEIKVKYYRKQKIAWKIFFDQLKNDINLTDHNLILQDQFKKQLMLTSKKDPKCLERFINSLKELGLYNKYKKTMSNLNNKQIKTYANLLFSIYENKEIRSEIKLRVLKNVILQLPIIFDCISK</sequence>
<keyword id="KW-1185">Reference proteome</keyword>